<evidence type="ECO:0000255" key="1">
    <source>
        <dbReference type="HAMAP-Rule" id="MF_00105"/>
    </source>
</evidence>
<name>GREA_FRAP2</name>
<accession>B0TYL2</accession>
<sequence length="160" mass="17666">MTNGRVPMTPAGEQALRAELSRLKKTERPAIIEAIAEARDHGDLKENAEYHAARERQGIIEGRIKDIESKLSNAQVIDVTKLQANGMVIFGATVTVINVDTEEETTYQIVGEDEADIDNHKISVVAPLARALIKKEVGDEIILDTPKGKVTYEIVDVEYK</sequence>
<reference key="1">
    <citation type="submission" date="2007-12" db="EMBL/GenBank/DDBJ databases">
        <title>Complete sequence of chromosome of Francisella philomiragia subsp. philomiragia ATCC 25017.</title>
        <authorList>
            <consortium name="US DOE Joint Genome Institute"/>
            <person name="Copeland A."/>
            <person name="Lucas S."/>
            <person name="Lapidus A."/>
            <person name="Barry K."/>
            <person name="Detter J.C."/>
            <person name="Glavina del Rio T."/>
            <person name="Hammon N."/>
            <person name="Israni S."/>
            <person name="Dalin E."/>
            <person name="Tice H."/>
            <person name="Pitluck S."/>
            <person name="Chain P."/>
            <person name="Malfatti S."/>
            <person name="Shin M."/>
            <person name="Vergez L."/>
            <person name="Schmutz J."/>
            <person name="Larimer F."/>
            <person name="Land M."/>
            <person name="Hauser L."/>
            <person name="Richardson P."/>
        </authorList>
    </citation>
    <scope>NUCLEOTIDE SEQUENCE [LARGE SCALE GENOMIC DNA]</scope>
    <source>
        <strain>ATCC 25017 / CCUG 19701 / FSC 153 / O#319-036</strain>
    </source>
</reference>
<organism>
    <name type="scientific">Francisella philomiragia subsp. philomiragia (strain ATCC 25017 / CCUG 19701 / FSC 153 / O#319-036)</name>
    <dbReference type="NCBI Taxonomy" id="484022"/>
    <lineage>
        <taxon>Bacteria</taxon>
        <taxon>Pseudomonadati</taxon>
        <taxon>Pseudomonadota</taxon>
        <taxon>Gammaproteobacteria</taxon>
        <taxon>Thiotrichales</taxon>
        <taxon>Francisellaceae</taxon>
        <taxon>Francisella</taxon>
    </lineage>
</organism>
<proteinExistence type="inferred from homology"/>
<comment type="function">
    <text evidence="1">Necessary for efficient RNA polymerase transcription elongation past template-encoded arresting sites. The arresting sites in DNA have the property of trapping a certain fraction of elongating RNA polymerases that pass through, resulting in locked ternary complexes. Cleavage of the nascent transcript by cleavage factors such as GreA or GreB allows the resumption of elongation from the new 3'terminus. GreA releases sequences of 2 to 3 nucleotides.</text>
</comment>
<comment type="similarity">
    <text evidence="1">Belongs to the GreA/GreB family.</text>
</comment>
<gene>
    <name evidence="1" type="primary">greA</name>
    <name type="ordered locus">Fphi_0156</name>
</gene>
<dbReference type="EMBL" id="CP000937">
    <property type="protein sequence ID" value="ABZ86377.1"/>
    <property type="molecule type" value="Genomic_DNA"/>
</dbReference>
<dbReference type="SMR" id="B0TYL2"/>
<dbReference type="KEGG" id="fph:Fphi_0156"/>
<dbReference type="eggNOG" id="COG0782">
    <property type="taxonomic scope" value="Bacteria"/>
</dbReference>
<dbReference type="HOGENOM" id="CLU_101379_2_0_6"/>
<dbReference type="GO" id="GO:0003677">
    <property type="term" value="F:DNA binding"/>
    <property type="evidence" value="ECO:0007669"/>
    <property type="project" value="UniProtKB-UniRule"/>
</dbReference>
<dbReference type="GO" id="GO:0070063">
    <property type="term" value="F:RNA polymerase binding"/>
    <property type="evidence" value="ECO:0007669"/>
    <property type="project" value="InterPro"/>
</dbReference>
<dbReference type="GO" id="GO:0006354">
    <property type="term" value="P:DNA-templated transcription elongation"/>
    <property type="evidence" value="ECO:0007669"/>
    <property type="project" value="TreeGrafter"/>
</dbReference>
<dbReference type="GO" id="GO:0032784">
    <property type="term" value="P:regulation of DNA-templated transcription elongation"/>
    <property type="evidence" value="ECO:0007669"/>
    <property type="project" value="UniProtKB-UniRule"/>
</dbReference>
<dbReference type="FunFam" id="1.10.287.180:FF:000001">
    <property type="entry name" value="Transcription elongation factor GreA"/>
    <property type="match status" value="1"/>
</dbReference>
<dbReference type="FunFam" id="3.10.50.30:FF:000001">
    <property type="entry name" value="Transcription elongation factor GreA"/>
    <property type="match status" value="1"/>
</dbReference>
<dbReference type="Gene3D" id="3.10.50.30">
    <property type="entry name" value="Transcription elongation factor, GreA/GreB, C-terminal domain"/>
    <property type="match status" value="1"/>
</dbReference>
<dbReference type="Gene3D" id="1.10.287.180">
    <property type="entry name" value="Transcription elongation factor, GreA/GreB, N-terminal domain"/>
    <property type="match status" value="1"/>
</dbReference>
<dbReference type="HAMAP" id="MF_00105">
    <property type="entry name" value="GreA_GreB"/>
    <property type="match status" value="1"/>
</dbReference>
<dbReference type="InterPro" id="IPR036953">
    <property type="entry name" value="GreA/GreB_C_sf"/>
</dbReference>
<dbReference type="InterPro" id="IPR018151">
    <property type="entry name" value="TF_GreA/GreB_CS"/>
</dbReference>
<dbReference type="InterPro" id="IPR006359">
    <property type="entry name" value="Tscrpt_elong_fac_GreA"/>
</dbReference>
<dbReference type="InterPro" id="IPR028624">
    <property type="entry name" value="Tscrpt_elong_fac_GreA/B"/>
</dbReference>
<dbReference type="InterPro" id="IPR001437">
    <property type="entry name" value="Tscrpt_elong_fac_GreA/B_C"/>
</dbReference>
<dbReference type="InterPro" id="IPR023459">
    <property type="entry name" value="Tscrpt_elong_fac_GreA/B_fam"/>
</dbReference>
<dbReference type="InterPro" id="IPR022691">
    <property type="entry name" value="Tscrpt_elong_fac_GreA/B_N"/>
</dbReference>
<dbReference type="InterPro" id="IPR036805">
    <property type="entry name" value="Tscrpt_elong_fac_GreA/B_N_sf"/>
</dbReference>
<dbReference type="NCBIfam" id="TIGR01462">
    <property type="entry name" value="greA"/>
    <property type="match status" value="1"/>
</dbReference>
<dbReference type="NCBIfam" id="NF001261">
    <property type="entry name" value="PRK00226.1-2"/>
    <property type="match status" value="1"/>
</dbReference>
<dbReference type="NCBIfam" id="NF001263">
    <property type="entry name" value="PRK00226.1-4"/>
    <property type="match status" value="1"/>
</dbReference>
<dbReference type="NCBIfam" id="NF001264">
    <property type="entry name" value="PRK00226.1-5"/>
    <property type="match status" value="1"/>
</dbReference>
<dbReference type="PANTHER" id="PTHR30437">
    <property type="entry name" value="TRANSCRIPTION ELONGATION FACTOR GREA"/>
    <property type="match status" value="1"/>
</dbReference>
<dbReference type="PANTHER" id="PTHR30437:SF4">
    <property type="entry name" value="TRANSCRIPTION ELONGATION FACTOR GREA"/>
    <property type="match status" value="1"/>
</dbReference>
<dbReference type="Pfam" id="PF01272">
    <property type="entry name" value="GreA_GreB"/>
    <property type="match status" value="1"/>
</dbReference>
<dbReference type="Pfam" id="PF03449">
    <property type="entry name" value="GreA_GreB_N"/>
    <property type="match status" value="1"/>
</dbReference>
<dbReference type="PIRSF" id="PIRSF006092">
    <property type="entry name" value="GreA_GreB"/>
    <property type="match status" value="1"/>
</dbReference>
<dbReference type="SUPFAM" id="SSF54534">
    <property type="entry name" value="FKBP-like"/>
    <property type="match status" value="1"/>
</dbReference>
<dbReference type="SUPFAM" id="SSF46557">
    <property type="entry name" value="GreA transcript cleavage protein, N-terminal domain"/>
    <property type="match status" value="1"/>
</dbReference>
<dbReference type="PROSITE" id="PS00829">
    <property type="entry name" value="GREAB_1"/>
    <property type="match status" value="1"/>
</dbReference>
<feature type="chain" id="PRO_1000202851" description="Transcription elongation factor GreA">
    <location>
        <begin position="1"/>
        <end position="160"/>
    </location>
</feature>
<protein>
    <recommendedName>
        <fullName evidence="1">Transcription elongation factor GreA</fullName>
    </recommendedName>
    <alternativeName>
        <fullName evidence="1">Transcript cleavage factor GreA</fullName>
    </alternativeName>
</protein>
<keyword id="KW-0238">DNA-binding</keyword>
<keyword id="KW-0804">Transcription</keyword>
<keyword id="KW-0805">Transcription regulation</keyword>